<proteinExistence type="inferred from homology"/>
<accession>B7K5I1</accession>
<evidence type="ECO:0000255" key="1">
    <source>
        <dbReference type="HAMAP-Rule" id="MF_01077"/>
    </source>
</evidence>
<reference key="1">
    <citation type="journal article" date="2011" name="MBio">
        <title>Novel metabolic attributes of the genus Cyanothece, comprising a group of unicellular nitrogen-fixing Cyanobacteria.</title>
        <authorList>
            <person name="Bandyopadhyay A."/>
            <person name="Elvitigala T."/>
            <person name="Welsh E."/>
            <person name="Stockel J."/>
            <person name="Liberton M."/>
            <person name="Min H."/>
            <person name="Sherman L.A."/>
            <person name="Pakrasi H.B."/>
        </authorList>
    </citation>
    <scope>NUCLEOTIDE SEQUENCE [LARGE SCALE GENOMIC DNA]</scope>
    <source>
        <strain>PCC 8801 / RF-1</strain>
    </source>
</reference>
<keyword id="KW-0963">Cytoplasm</keyword>
<keyword id="KW-1185">Reference proteome</keyword>
<keyword id="KW-0690">Ribosome biogenesis</keyword>
<gene>
    <name evidence="1" type="primary">rimP</name>
    <name type="ordered locus">PCC8801_2713</name>
</gene>
<sequence>MTHPLIPQIINLATPIAEDRGLEVVDVVFQTNKRPPVLRVDIRNSQGETSLDDCEAVSRALEAVLDESQVMGGSYVLEISSPGISRQLHSDREFISFKGFAVIVTTEIPYLDHKEWRGQLQGRDESAVYINQKGRAIAIPRELIAKVQLDEHR</sequence>
<dbReference type="EMBL" id="CP001287">
    <property type="protein sequence ID" value="ACK66714.1"/>
    <property type="molecule type" value="Genomic_DNA"/>
</dbReference>
<dbReference type="RefSeq" id="WP_012595981.1">
    <property type="nucleotide sequence ID" value="NC_011726.1"/>
</dbReference>
<dbReference type="SMR" id="B7K5I1"/>
<dbReference type="STRING" id="41431.PCC8801_2713"/>
<dbReference type="KEGG" id="cyp:PCC8801_2713"/>
<dbReference type="eggNOG" id="COG0779">
    <property type="taxonomic scope" value="Bacteria"/>
</dbReference>
<dbReference type="HOGENOM" id="CLU_070525_2_1_3"/>
<dbReference type="OrthoDB" id="9805006at2"/>
<dbReference type="Proteomes" id="UP000008204">
    <property type="component" value="Chromosome"/>
</dbReference>
<dbReference type="GO" id="GO:0005829">
    <property type="term" value="C:cytosol"/>
    <property type="evidence" value="ECO:0007669"/>
    <property type="project" value="TreeGrafter"/>
</dbReference>
<dbReference type="GO" id="GO:0000028">
    <property type="term" value="P:ribosomal small subunit assembly"/>
    <property type="evidence" value="ECO:0007669"/>
    <property type="project" value="TreeGrafter"/>
</dbReference>
<dbReference type="GO" id="GO:0006412">
    <property type="term" value="P:translation"/>
    <property type="evidence" value="ECO:0007669"/>
    <property type="project" value="TreeGrafter"/>
</dbReference>
<dbReference type="CDD" id="cd01734">
    <property type="entry name" value="YlxS_C"/>
    <property type="match status" value="1"/>
</dbReference>
<dbReference type="FunFam" id="3.30.300.70:FF:000001">
    <property type="entry name" value="Ribosome maturation factor RimP"/>
    <property type="match status" value="1"/>
</dbReference>
<dbReference type="Gene3D" id="3.30.300.70">
    <property type="entry name" value="RimP-like superfamily, N-terminal"/>
    <property type="match status" value="1"/>
</dbReference>
<dbReference type="HAMAP" id="MF_01077">
    <property type="entry name" value="RimP"/>
    <property type="match status" value="1"/>
</dbReference>
<dbReference type="InterPro" id="IPR003728">
    <property type="entry name" value="Ribosome_maturation_RimP"/>
</dbReference>
<dbReference type="InterPro" id="IPR028998">
    <property type="entry name" value="RimP_C"/>
</dbReference>
<dbReference type="InterPro" id="IPR036847">
    <property type="entry name" value="RimP_C_sf"/>
</dbReference>
<dbReference type="InterPro" id="IPR028989">
    <property type="entry name" value="RimP_N"/>
</dbReference>
<dbReference type="InterPro" id="IPR035956">
    <property type="entry name" value="RimP_N_sf"/>
</dbReference>
<dbReference type="NCBIfam" id="NF000935">
    <property type="entry name" value="PRK00092.3-3"/>
    <property type="match status" value="1"/>
</dbReference>
<dbReference type="PANTHER" id="PTHR33867">
    <property type="entry name" value="RIBOSOME MATURATION FACTOR RIMP"/>
    <property type="match status" value="1"/>
</dbReference>
<dbReference type="PANTHER" id="PTHR33867:SF1">
    <property type="entry name" value="RIBOSOME MATURATION FACTOR RIMP"/>
    <property type="match status" value="1"/>
</dbReference>
<dbReference type="Pfam" id="PF02576">
    <property type="entry name" value="RimP_N"/>
    <property type="match status" value="1"/>
</dbReference>
<dbReference type="SUPFAM" id="SSF74942">
    <property type="entry name" value="YhbC-like, C-terminal domain"/>
    <property type="match status" value="1"/>
</dbReference>
<dbReference type="SUPFAM" id="SSF75420">
    <property type="entry name" value="YhbC-like, N-terminal domain"/>
    <property type="match status" value="1"/>
</dbReference>
<feature type="chain" id="PRO_1000136756" description="Ribosome maturation factor RimP">
    <location>
        <begin position="1"/>
        <end position="153"/>
    </location>
</feature>
<name>RIMP_RIPO1</name>
<protein>
    <recommendedName>
        <fullName evidence="1">Ribosome maturation factor RimP</fullName>
    </recommendedName>
</protein>
<comment type="function">
    <text evidence="1">Required for maturation of 30S ribosomal subunits.</text>
</comment>
<comment type="subcellular location">
    <subcellularLocation>
        <location evidence="1">Cytoplasm</location>
    </subcellularLocation>
</comment>
<comment type="similarity">
    <text evidence="1">Belongs to the RimP family.</text>
</comment>
<organism>
    <name type="scientific">Rippkaea orientalis (strain PCC 8801 / RF-1)</name>
    <name type="common">Cyanothece sp. (strain PCC 8801)</name>
    <dbReference type="NCBI Taxonomy" id="41431"/>
    <lineage>
        <taxon>Bacteria</taxon>
        <taxon>Bacillati</taxon>
        <taxon>Cyanobacteriota</taxon>
        <taxon>Cyanophyceae</taxon>
        <taxon>Oscillatoriophycideae</taxon>
        <taxon>Chroococcales</taxon>
        <taxon>Aphanothecaceae</taxon>
        <taxon>Rippkaea</taxon>
        <taxon>Rippkaea orientalis</taxon>
    </lineage>
</organism>